<sequence length="235" mass="27074">MLTYDRWETVEKPSFPSDNETKGALDVLAWAYREYGDEIVYACSFGIEGIVLIDLISQVKPDAEIVFLDTGLHFQETYDTIAKVKETYPSLRIIMKQPHLTLEEQAAQFGDELWKRDPNKCCELRKVIPLREVLTGVTAWISGLRREQSPTRRHVEYVNKDDKFRSIKVCPLIHWTWKDVWNYVYKHSLPYNVLHDRGYPSIGCAPCTAPALDPNDLRSGRWAGQGKTECGLHLT</sequence>
<dbReference type="EC" id="1.8.4.10" evidence="1"/>
<dbReference type="EMBL" id="CP000557">
    <property type="protein sequence ID" value="ABO65771.1"/>
    <property type="molecule type" value="Genomic_DNA"/>
</dbReference>
<dbReference type="RefSeq" id="WP_008881204.1">
    <property type="nucleotide sequence ID" value="NC_009328.1"/>
</dbReference>
<dbReference type="SMR" id="A4IKB7"/>
<dbReference type="GeneID" id="87622004"/>
<dbReference type="KEGG" id="gtn:GTNG_0389"/>
<dbReference type="eggNOG" id="COG0175">
    <property type="taxonomic scope" value="Bacteria"/>
</dbReference>
<dbReference type="HOGENOM" id="CLU_044089_2_1_9"/>
<dbReference type="Proteomes" id="UP000001578">
    <property type="component" value="Chromosome"/>
</dbReference>
<dbReference type="GO" id="GO:0005737">
    <property type="term" value="C:cytoplasm"/>
    <property type="evidence" value="ECO:0007669"/>
    <property type="project" value="UniProtKB-SubCell"/>
</dbReference>
<dbReference type="GO" id="GO:0051539">
    <property type="term" value="F:4 iron, 4 sulfur cluster binding"/>
    <property type="evidence" value="ECO:0007669"/>
    <property type="project" value="UniProtKB-UniRule"/>
</dbReference>
<dbReference type="GO" id="GO:0043866">
    <property type="term" value="F:adenylyl-sulfate reductase (thioredoxin) activity"/>
    <property type="evidence" value="ECO:0007669"/>
    <property type="project" value="UniProtKB-EC"/>
</dbReference>
<dbReference type="GO" id="GO:0046872">
    <property type="term" value="F:metal ion binding"/>
    <property type="evidence" value="ECO:0007669"/>
    <property type="project" value="UniProtKB-KW"/>
</dbReference>
<dbReference type="GO" id="GO:0004604">
    <property type="term" value="F:phosphoadenylyl-sulfate reductase (thioredoxin) activity"/>
    <property type="evidence" value="ECO:0007669"/>
    <property type="project" value="UniProtKB-UniRule"/>
</dbReference>
<dbReference type="GO" id="GO:0019344">
    <property type="term" value="P:cysteine biosynthetic process"/>
    <property type="evidence" value="ECO:0007669"/>
    <property type="project" value="InterPro"/>
</dbReference>
<dbReference type="GO" id="GO:0070814">
    <property type="term" value="P:hydrogen sulfide biosynthetic process"/>
    <property type="evidence" value="ECO:0007669"/>
    <property type="project" value="UniProtKB-UniRule"/>
</dbReference>
<dbReference type="GO" id="GO:0019379">
    <property type="term" value="P:sulfate assimilation, phosphoadenylyl sulfate reduction by phosphoadenylyl-sulfate reductase (thioredoxin)"/>
    <property type="evidence" value="ECO:0007669"/>
    <property type="project" value="UniProtKB-UniRule"/>
</dbReference>
<dbReference type="CDD" id="cd23945">
    <property type="entry name" value="PAPS_reductase"/>
    <property type="match status" value="1"/>
</dbReference>
<dbReference type="FunFam" id="3.40.50.620:FF:000095">
    <property type="entry name" value="Phosphoadenosine phosphosulfate reductase"/>
    <property type="match status" value="1"/>
</dbReference>
<dbReference type="Gene3D" id="3.40.50.620">
    <property type="entry name" value="HUPs"/>
    <property type="match status" value="1"/>
</dbReference>
<dbReference type="HAMAP" id="MF_00063">
    <property type="entry name" value="CysH"/>
    <property type="match status" value="1"/>
</dbReference>
<dbReference type="InterPro" id="IPR011798">
    <property type="entry name" value="APS_reductase"/>
</dbReference>
<dbReference type="InterPro" id="IPR004511">
    <property type="entry name" value="PAPS/APS_Rdtase"/>
</dbReference>
<dbReference type="InterPro" id="IPR002500">
    <property type="entry name" value="PAPS_reduct_dom"/>
</dbReference>
<dbReference type="InterPro" id="IPR014729">
    <property type="entry name" value="Rossmann-like_a/b/a_fold"/>
</dbReference>
<dbReference type="NCBIfam" id="TIGR02055">
    <property type="entry name" value="APS_reductase"/>
    <property type="match status" value="1"/>
</dbReference>
<dbReference type="NCBIfam" id="TIGR00434">
    <property type="entry name" value="cysH"/>
    <property type="match status" value="1"/>
</dbReference>
<dbReference type="NCBIfam" id="NF002537">
    <property type="entry name" value="PRK02090.1"/>
    <property type="match status" value="1"/>
</dbReference>
<dbReference type="PANTHER" id="PTHR46509">
    <property type="entry name" value="PHOSPHOADENOSINE PHOSPHOSULFATE REDUCTASE"/>
    <property type="match status" value="1"/>
</dbReference>
<dbReference type="PANTHER" id="PTHR46509:SF1">
    <property type="entry name" value="PHOSPHOADENOSINE PHOSPHOSULFATE REDUCTASE"/>
    <property type="match status" value="1"/>
</dbReference>
<dbReference type="Pfam" id="PF01507">
    <property type="entry name" value="PAPS_reduct"/>
    <property type="match status" value="1"/>
</dbReference>
<dbReference type="PIRSF" id="PIRSF000857">
    <property type="entry name" value="PAPS_reductase"/>
    <property type="match status" value="1"/>
</dbReference>
<dbReference type="SUPFAM" id="SSF52402">
    <property type="entry name" value="Adenine nucleotide alpha hydrolases-like"/>
    <property type="match status" value="1"/>
</dbReference>
<reference key="1">
    <citation type="journal article" date="2007" name="Proc. Natl. Acad. Sci. U.S.A.">
        <title>Genome and proteome of long-chain alkane degrading Geobacillus thermodenitrificans NG80-2 isolated from a deep-subsurface oil reservoir.</title>
        <authorList>
            <person name="Feng L."/>
            <person name="Wang W."/>
            <person name="Cheng J."/>
            <person name="Ren Y."/>
            <person name="Zhao G."/>
            <person name="Gao C."/>
            <person name="Tang Y."/>
            <person name="Liu X."/>
            <person name="Han W."/>
            <person name="Peng X."/>
            <person name="Liu R."/>
            <person name="Wang L."/>
        </authorList>
    </citation>
    <scope>NUCLEOTIDE SEQUENCE [LARGE SCALE GENOMIC DNA]</scope>
    <source>
        <strain>NG80-2</strain>
    </source>
</reference>
<protein>
    <recommendedName>
        <fullName evidence="1">Adenosine 5'-phosphosulfate reductase</fullName>
        <shortName evidence="1">APS reductase</shortName>
        <ecNumber evidence="1">1.8.4.10</ecNumber>
    </recommendedName>
    <alternativeName>
        <fullName evidence="1">5'-adenylylsulfate reductase</fullName>
    </alternativeName>
    <alternativeName>
        <fullName evidence="1">Thioredoxin-dependent 5'-adenylylsulfate reductase</fullName>
    </alternativeName>
</protein>
<keyword id="KW-0963">Cytoplasm</keyword>
<keyword id="KW-0408">Iron</keyword>
<keyword id="KW-0411">Iron-sulfur</keyword>
<keyword id="KW-0479">Metal-binding</keyword>
<keyword id="KW-0560">Oxidoreductase</keyword>
<organism>
    <name type="scientific">Geobacillus thermodenitrificans (strain NG80-2)</name>
    <dbReference type="NCBI Taxonomy" id="420246"/>
    <lineage>
        <taxon>Bacteria</taxon>
        <taxon>Bacillati</taxon>
        <taxon>Bacillota</taxon>
        <taxon>Bacilli</taxon>
        <taxon>Bacillales</taxon>
        <taxon>Anoxybacillaceae</taxon>
        <taxon>Geobacillus</taxon>
    </lineage>
</organism>
<accession>A4IKB7</accession>
<name>CYSH_GEOTN</name>
<gene>
    <name evidence="1" type="primary">cysH</name>
    <name type="ordered locus">GTNG_0389</name>
</gene>
<feature type="chain" id="PRO_1000008927" description="Adenosine 5'-phosphosulfate reductase">
    <location>
        <begin position="1"/>
        <end position="235"/>
    </location>
</feature>
<feature type="active site" description="Nucleophile; cysteine thiosulfonate intermediate" evidence="1">
    <location>
        <position position="230"/>
    </location>
</feature>
<feature type="binding site" evidence="1">
    <location>
        <position position="121"/>
    </location>
    <ligand>
        <name>[4Fe-4S] cluster</name>
        <dbReference type="ChEBI" id="CHEBI:49883"/>
    </ligand>
</feature>
<feature type="binding site" evidence="1">
    <location>
        <position position="122"/>
    </location>
    <ligand>
        <name>[4Fe-4S] cluster</name>
        <dbReference type="ChEBI" id="CHEBI:49883"/>
    </ligand>
</feature>
<feature type="binding site" evidence="1">
    <location>
        <position position="204"/>
    </location>
    <ligand>
        <name>[4Fe-4S] cluster</name>
        <dbReference type="ChEBI" id="CHEBI:49883"/>
    </ligand>
</feature>
<feature type="binding site" evidence="1">
    <location>
        <position position="207"/>
    </location>
    <ligand>
        <name>[4Fe-4S] cluster</name>
        <dbReference type="ChEBI" id="CHEBI:49883"/>
    </ligand>
</feature>
<comment type="function">
    <text evidence="1">Catalyzes the formation of sulfite from adenosine 5'-phosphosulfate (APS) using thioredoxin as an electron donor.</text>
</comment>
<comment type="catalytic activity">
    <reaction evidence="1">
        <text>[thioredoxin]-disulfide + sulfite + AMP + 2 H(+) = adenosine 5'-phosphosulfate + [thioredoxin]-dithiol</text>
        <dbReference type="Rhea" id="RHEA:21976"/>
        <dbReference type="Rhea" id="RHEA-COMP:10698"/>
        <dbReference type="Rhea" id="RHEA-COMP:10700"/>
        <dbReference type="ChEBI" id="CHEBI:15378"/>
        <dbReference type="ChEBI" id="CHEBI:17359"/>
        <dbReference type="ChEBI" id="CHEBI:29950"/>
        <dbReference type="ChEBI" id="CHEBI:50058"/>
        <dbReference type="ChEBI" id="CHEBI:58243"/>
        <dbReference type="ChEBI" id="CHEBI:456215"/>
        <dbReference type="EC" id="1.8.4.10"/>
    </reaction>
</comment>
<comment type="cofactor">
    <cofactor evidence="1">
        <name>[4Fe-4S] cluster</name>
        <dbReference type="ChEBI" id="CHEBI:49883"/>
    </cofactor>
    <text evidence="1">Binds 1 [4Fe-4S] cluster per subunit.</text>
</comment>
<comment type="pathway">
    <text evidence="1">Sulfur metabolism; hydrogen sulfide biosynthesis; sulfite from sulfate.</text>
</comment>
<comment type="subcellular location">
    <subcellularLocation>
        <location evidence="1">Cytoplasm</location>
    </subcellularLocation>
</comment>
<comment type="similarity">
    <text evidence="1">Belongs to the PAPS reductase family. CysH subfamily.</text>
</comment>
<proteinExistence type="inferred from homology"/>
<evidence type="ECO:0000255" key="1">
    <source>
        <dbReference type="HAMAP-Rule" id="MF_00063"/>
    </source>
</evidence>